<gene>
    <name type="primary">Adamts4</name>
</gene>
<protein>
    <recommendedName>
        <fullName>A disintegrin and metalloproteinase with thrombospondin motifs 4</fullName>
        <shortName>ADAM-TS 4</shortName>
        <shortName>ADAM-TS4</shortName>
        <shortName>ADAMTS-4</shortName>
        <ecNumber>3.4.24.82</ecNumber>
    </recommendedName>
    <alternativeName>
        <fullName>Aggrecanase-1</fullName>
    </alternativeName>
</protein>
<name>ATS4_MOUSE</name>
<feature type="signal peptide" evidence="3">
    <location>
        <begin position="1"/>
        <end position="49"/>
    </location>
</feature>
<feature type="propeptide" id="PRO_0000029166" evidence="1">
    <location>
        <begin position="50"/>
        <end position="208"/>
    </location>
</feature>
<feature type="chain" id="PRO_0000029167" description="A disintegrin and metalloproteinase with thrombospondin motifs 4">
    <location>
        <begin position="209"/>
        <end position="833"/>
    </location>
</feature>
<feature type="domain" description="Peptidase M12B" evidence="5">
    <location>
        <begin position="214"/>
        <end position="424"/>
    </location>
</feature>
<feature type="domain" description="Disintegrin">
    <location>
        <begin position="433"/>
        <end position="515"/>
    </location>
</feature>
<feature type="domain" description="TSP type-1" evidence="4">
    <location>
        <begin position="516"/>
        <end position="571"/>
    </location>
</feature>
<feature type="region of interest" description="Disordered" evidence="7">
    <location>
        <begin position="180"/>
        <end position="204"/>
    </location>
</feature>
<feature type="region of interest" description="Spacer">
    <location>
        <begin position="682"/>
        <end position="833"/>
    </location>
</feature>
<feature type="short sequence motif" description="Cysteine switch" evidence="1">
    <location>
        <begin position="188"/>
        <end position="195"/>
    </location>
</feature>
<feature type="active site" evidence="5 6">
    <location>
        <position position="358"/>
    </location>
</feature>
<feature type="binding site" description="in inhibited form" evidence="1">
    <location>
        <position position="190"/>
    </location>
    <ligand>
        <name>Zn(2+)</name>
        <dbReference type="ChEBI" id="CHEBI:29105"/>
        <note>catalytic</note>
    </ligand>
</feature>
<feature type="binding site" evidence="2">
    <location>
        <position position="357"/>
    </location>
    <ligand>
        <name>Zn(2+)</name>
        <dbReference type="ChEBI" id="CHEBI:29105"/>
        <note>catalytic</note>
    </ligand>
</feature>
<feature type="binding site" evidence="2">
    <location>
        <position position="361"/>
    </location>
    <ligand>
        <name>Zn(2+)</name>
        <dbReference type="ChEBI" id="CHEBI:29105"/>
        <note>catalytic</note>
    </ligand>
</feature>
<feature type="binding site" evidence="2">
    <location>
        <position position="367"/>
    </location>
    <ligand>
        <name>Zn(2+)</name>
        <dbReference type="ChEBI" id="CHEBI:29105"/>
        <note>catalytic</note>
    </ligand>
</feature>
<feature type="glycosylation site" description="N-linked (GlcNAc...) asparagine" evidence="3">
    <location>
        <position position="63"/>
    </location>
</feature>
<feature type="glycosylation site" description="N-linked (GlcNAc...) asparagine" evidence="3">
    <location>
        <position position="299"/>
    </location>
</feature>
<feature type="disulfide bond" evidence="2">
    <location>
        <begin position="289"/>
        <end position="341"/>
    </location>
</feature>
<feature type="disulfide bond" evidence="2">
    <location>
        <begin position="318"/>
        <end position="323"/>
    </location>
</feature>
<feature type="disulfide bond" evidence="2">
    <location>
        <begin position="335"/>
        <end position="419"/>
    </location>
</feature>
<feature type="disulfide bond" evidence="2">
    <location>
        <begin position="373"/>
        <end position="403"/>
    </location>
</feature>
<feature type="disulfide bond" evidence="2">
    <location>
        <begin position="445"/>
        <end position="468"/>
    </location>
</feature>
<feature type="disulfide bond" evidence="2">
    <location>
        <begin position="456"/>
        <end position="478"/>
    </location>
</feature>
<feature type="disulfide bond" evidence="2">
    <location>
        <begin position="463"/>
        <end position="497"/>
    </location>
</feature>
<feature type="disulfide bond" evidence="2">
    <location>
        <begin position="491"/>
        <end position="502"/>
    </location>
</feature>
<feature type="disulfide bond" evidence="1">
    <location>
        <begin position="528"/>
        <end position="565"/>
    </location>
</feature>
<feature type="disulfide bond" evidence="1">
    <location>
        <begin position="532"/>
        <end position="570"/>
    </location>
</feature>
<feature type="disulfide bond" evidence="1">
    <location>
        <begin position="543"/>
        <end position="555"/>
    </location>
</feature>
<feature type="sequence conflict" description="In Ref. 2; AAH27773." evidence="9" ref="2">
    <original>Q</original>
    <variation>R</variation>
    <location>
        <position position="18"/>
    </location>
</feature>
<comment type="function">
    <text evidence="2">Cleaves aggrecan, a cartilage proteoglycan, at the '392-Glu-|-Ala-393' site and may be involved in its turnover. Also cleaves COMP. May play an important role in the destruction of aggrecan in arthritic diseases.</text>
</comment>
<comment type="catalytic activity">
    <reaction>
        <text>Glutamyl endopeptidase. Bonds cleaved include 370-Thr-Glu-Gly-Glu-|-Ala-Arg-Gly-Ser-377 in the interglobular domain of mammalian aggrecan.</text>
        <dbReference type="EC" id="3.4.24.82"/>
    </reaction>
</comment>
<comment type="cofactor">
    <cofactor evidence="2">
        <name>Zn(2+)</name>
        <dbReference type="ChEBI" id="CHEBI:29105"/>
    </cofactor>
    <text evidence="2">Binds 1 zinc ion per subunit.</text>
</comment>
<comment type="subunit">
    <text evidence="1">Interacts with SRPX2.</text>
</comment>
<comment type="subcellular location">
    <subcellularLocation>
        <location evidence="1">Secreted</location>
        <location evidence="1">Extracellular space</location>
        <location evidence="1">Extracellular matrix</location>
    </subcellularLocation>
</comment>
<comment type="developmental stage">
    <text evidence="8">In embryonic skeletal muscle, significantly increased levels between 13.5 dpc and 15.5 dpc with maximal expression observed at 15.5 dpc (PubMed:23233679). Decreased levels in postnatal skeletal muscle (PubMed:23233679). In myoblasts, up-regulated soon after induction of myoblast differentiation (PubMed:23233679).</text>
</comment>
<comment type="domain">
    <text evidence="2">The spacer domain and the TSP type-1 domains are important for a tight interaction with the extracellular matrix. The spacer domain is also required for cleavage of COMP (By similarity).</text>
</comment>
<comment type="domain">
    <text>The conserved cysteine present in the cysteine-switch motif binds the catalytic zinc ion, thus inhibiting the enzyme. The dissociation of the cysteine from the zinc ion upon the activation-peptide release activates the enzyme.</text>
</comment>
<comment type="PTM">
    <text evidence="1">The precursor is cleaved by a furin endopeptidase.</text>
</comment>
<comment type="PTM">
    <text evidence="1">Glycosylated. Can be O-fucosylated by POFUT2 on a serine or a threonine residue found within the consensus sequence C1-X(2)-(S/T)-C2-G of the TSP type-1 repeat domains where C1 and C2 are the first and second cysteine residue of the repeat, respectively. Fucosylated repeats can then be further glycosylated by the addition of a beta-1,3-glucose residue by the glucosyltransferase, B3GALTL. Fucosylation mediates the efficient secretion of ADAMTS family members. Can also be C-glycosylated with one or two mannose molecules on tryptophan residues within the consensus sequence W-X-X-W of the TPRs, and N-glycosylated. These other glycosylations can also facilitate secretion (By similarity).</text>
</comment>
<comment type="sequence caution" evidence="9">
    <conflict type="erroneous initiation">
        <sequence resource="EMBL-CDS" id="BAC38944"/>
    </conflict>
</comment>
<keyword id="KW-0165">Cleavage on pair of basic residues</keyword>
<keyword id="KW-1015">Disulfide bond</keyword>
<keyword id="KW-0272">Extracellular matrix</keyword>
<keyword id="KW-0325">Glycoprotein</keyword>
<keyword id="KW-0378">Hydrolase</keyword>
<keyword id="KW-0479">Metal-binding</keyword>
<keyword id="KW-0482">Metalloprotease</keyword>
<keyword id="KW-0645">Protease</keyword>
<keyword id="KW-1185">Reference proteome</keyword>
<keyword id="KW-0964">Secreted</keyword>
<keyword id="KW-0732">Signal</keyword>
<keyword id="KW-0862">Zinc</keyword>
<keyword id="KW-0865">Zymogen</keyword>
<reference key="1">
    <citation type="journal article" date="2005" name="Science">
        <title>The transcriptional landscape of the mammalian genome.</title>
        <authorList>
            <person name="Carninci P."/>
            <person name="Kasukawa T."/>
            <person name="Katayama S."/>
            <person name="Gough J."/>
            <person name="Frith M.C."/>
            <person name="Maeda N."/>
            <person name="Oyama R."/>
            <person name="Ravasi T."/>
            <person name="Lenhard B."/>
            <person name="Wells C."/>
            <person name="Kodzius R."/>
            <person name="Shimokawa K."/>
            <person name="Bajic V.B."/>
            <person name="Brenner S.E."/>
            <person name="Batalov S."/>
            <person name="Forrest A.R."/>
            <person name="Zavolan M."/>
            <person name="Davis M.J."/>
            <person name="Wilming L.G."/>
            <person name="Aidinis V."/>
            <person name="Allen J.E."/>
            <person name="Ambesi-Impiombato A."/>
            <person name="Apweiler R."/>
            <person name="Aturaliya R.N."/>
            <person name="Bailey T.L."/>
            <person name="Bansal M."/>
            <person name="Baxter L."/>
            <person name="Beisel K.W."/>
            <person name="Bersano T."/>
            <person name="Bono H."/>
            <person name="Chalk A.M."/>
            <person name="Chiu K.P."/>
            <person name="Choudhary V."/>
            <person name="Christoffels A."/>
            <person name="Clutterbuck D.R."/>
            <person name="Crowe M.L."/>
            <person name="Dalla E."/>
            <person name="Dalrymple B.P."/>
            <person name="de Bono B."/>
            <person name="Della Gatta G."/>
            <person name="di Bernardo D."/>
            <person name="Down T."/>
            <person name="Engstrom P."/>
            <person name="Fagiolini M."/>
            <person name="Faulkner G."/>
            <person name="Fletcher C.F."/>
            <person name="Fukushima T."/>
            <person name="Furuno M."/>
            <person name="Futaki S."/>
            <person name="Gariboldi M."/>
            <person name="Georgii-Hemming P."/>
            <person name="Gingeras T.R."/>
            <person name="Gojobori T."/>
            <person name="Green R.E."/>
            <person name="Gustincich S."/>
            <person name="Harbers M."/>
            <person name="Hayashi Y."/>
            <person name="Hensch T.K."/>
            <person name="Hirokawa N."/>
            <person name="Hill D."/>
            <person name="Huminiecki L."/>
            <person name="Iacono M."/>
            <person name="Ikeo K."/>
            <person name="Iwama A."/>
            <person name="Ishikawa T."/>
            <person name="Jakt M."/>
            <person name="Kanapin A."/>
            <person name="Katoh M."/>
            <person name="Kawasawa Y."/>
            <person name="Kelso J."/>
            <person name="Kitamura H."/>
            <person name="Kitano H."/>
            <person name="Kollias G."/>
            <person name="Krishnan S.P."/>
            <person name="Kruger A."/>
            <person name="Kummerfeld S.K."/>
            <person name="Kurochkin I.V."/>
            <person name="Lareau L.F."/>
            <person name="Lazarevic D."/>
            <person name="Lipovich L."/>
            <person name="Liu J."/>
            <person name="Liuni S."/>
            <person name="McWilliam S."/>
            <person name="Madan Babu M."/>
            <person name="Madera M."/>
            <person name="Marchionni L."/>
            <person name="Matsuda H."/>
            <person name="Matsuzawa S."/>
            <person name="Miki H."/>
            <person name="Mignone F."/>
            <person name="Miyake S."/>
            <person name="Morris K."/>
            <person name="Mottagui-Tabar S."/>
            <person name="Mulder N."/>
            <person name="Nakano N."/>
            <person name="Nakauchi H."/>
            <person name="Ng P."/>
            <person name="Nilsson R."/>
            <person name="Nishiguchi S."/>
            <person name="Nishikawa S."/>
            <person name="Nori F."/>
            <person name="Ohara O."/>
            <person name="Okazaki Y."/>
            <person name="Orlando V."/>
            <person name="Pang K.C."/>
            <person name="Pavan W.J."/>
            <person name="Pavesi G."/>
            <person name="Pesole G."/>
            <person name="Petrovsky N."/>
            <person name="Piazza S."/>
            <person name="Reed J."/>
            <person name="Reid J.F."/>
            <person name="Ring B.Z."/>
            <person name="Ringwald M."/>
            <person name="Rost B."/>
            <person name="Ruan Y."/>
            <person name="Salzberg S.L."/>
            <person name="Sandelin A."/>
            <person name="Schneider C."/>
            <person name="Schoenbach C."/>
            <person name="Sekiguchi K."/>
            <person name="Semple C.A."/>
            <person name="Seno S."/>
            <person name="Sessa L."/>
            <person name="Sheng Y."/>
            <person name="Shibata Y."/>
            <person name="Shimada H."/>
            <person name="Shimada K."/>
            <person name="Silva D."/>
            <person name="Sinclair B."/>
            <person name="Sperling S."/>
            <person name="Stupka E."/>
            <person name="Sugiura K."/>
            <person name="Sultana R."/>
            <person name="Takenaka Y."/>
            <person name="Taki K."/>
            <person name="Tammoja K."/>
            <person name="Tan S.L."/>
            <person name="Tang S."/>
            <person name="Taylor M.S."/>
            <person name="Tegner J."/>
            <person name="Teichmann S.A."/>
            <person name="Ueda H.R."/>
            <person name="van Nimwegen E."/>
            <person name="Verardo R."/>
            <person name="Wei C.L."/>
            <person name="Yagi K."/>
            <person name="Yamanishi H."/>
            <person name="Zabarovsky E."/>
            <person name="Zhu S."/>
            <person name="Zimmer A."/>
            <person name="Hide W."/>
            <person name="Bult C."/>
            <person name="Grimmond S.M."/>
            <person name="Teasdale R.D."/>
            <person name="Liu E.T."/>
            <person name="Brusic V."/>
            <person name="Quackenbush J."/>
            <person name="Wahlestedt C."/>
            <person name="Mattick J.S."/>
            <person name="Hume D.A."/>
            <person name="Kai C."/>
            <person name="Sasaki D."/>
            <person name="Tomaru Y."/>
            <person name="Fukuda S."/>
            <person name="Kanamori-Katayama M."/>
            <person name="Suzuki M."/>
            <person name="Aoki J."/>
            <person name="Arakawa T."/>
            <person name="Iida J."/>
            <person name="Imamura K."/>
            <person name="Itoh M."/>
            <person name="Kato T."/>
            <person name="Kawaji H."/>
            <person name="Kawagashira N."/>
            <person name="Kawashima T."/>
            <person name="Kojima M."/>
            <person name="Kondo S."/>
            <person name="Konno H."/>
            <person name="Nakano K."/>
            <person name="Ninomiya N."/>
            <person name="Nishio T."/>
            <person name="Okada M."/>
            <person name="Plessy C."/>
            <person name="Shibata K."/>
            <person name="Shiraki T."/>
            <person name="Suzuki S."/>
            <person name="Tagami M."/>
            <person name="Waki K."/>
            <person name="Watahiki A."/>
            <person name="Okamura-Oho Y."/>
            <person name="Suzuki H."/>
            <person name="Kawai J."/>
            <person name="Hayashizaki Y."/>
        </authorList>
    </citation>
    <scope>NUCLEOTIDE SEQUENCE [LARGE SCALE MRNA]</scope>
    <source>
        <strain>C57BL/6J</strain>
    </source>
</reference>
<reference key="2">
    <citation type="journal article" date="2004" name="Genome Res.">
        <title>The status, quality, and expansion of the NIH full-length cDNA project: the Mammalian Gene Collection (MGC).</title>
        <authorList>
            <consortium name="The MGC Project Team"/>
        </authorList>
    </citation>
    <scope>NUCLEOTIDE SEQUENCE [LARGE SCALE MRNA]</scope>
    <source>
        <strain>FVB/N</strain>
        <tissue>Mammary tumor</tissue>
    </source>
</reference>
<reference key="3">
    <citation type="journal article" date="2013" name="J. Biol. Chem.">
        <title>Versican processing by a disintegrin-like and metalloproteinase domain with thrombospondin-1 repeats proteinases-5 and -15 facilitates myoblast fusion.</title>
        <authorList>
            <person name="Stupka N."/>
            <person name="Kintakas C."/>
            <person name="White J.D."/>
            <person name="Fraser F.W."/>
            <person name="Hanciu M."/>
            <person name="Aramaki-Hattori N."/>
            <person name="Martin S."/>
            <person name="Coles C."/>
            <person name="Collier F."/>
            <person name="Ward A.C."/>
            <person name="Apte S.S."/>
            <person name="McCulloch D.R."/>
        </authorList>
    </citation>
    <scope>DEVELOPMENTAL STAGE</scope>
</reference>
<proteinExistence type="evidence at transcript level"/>
<accession>Q8BNJ2</accession>
<accession>Q8K384</accession>
<evidence type="ECO:0000250" key="1"/>
<evidence type="ECO:0000250" key="2">
    <source>
        <dbReference type="UniProtKB" id="O75173"/>
    </source>
</evidence>
<evidence type="ECO:0000255" key="3"/>
<evidence type="ECO:0000255" key="4">
    <source>
        <dbReference type="PROSITE-ProRule" id="PRU00210"/>
    </source>
</evidence>
<evidence type="ECO:0000255" key="5">
    <source>
        <dbReference type="PROSITE-ProRule" id="PRU00276"/>
    </source>
</evidence>
<evidence type="ECO:0000255" key="6">
    <source>
        <dbReference type="PROSITE-ProRule" id="PRU10095"/>
    </source>
</evidence>
<evidence type="ECO:0000256" key="7">
    <source>
        <dbReference type="SAM" id="MobiDB-lite"/>
    </source>
</evidence>
<evidence type="ECO:0000269" key="8">
    <source>
    </source>
</evidence>
<evidence type="ECO:0000305" key="9"/>
<organism>
    <name type="scientific">Mus musculus</name>
    <name type="common">Mouse</name>
    <dbReference type="NCBI Taxonomy" id="10090"/>
    <lineage>
        <taxon>Eukaryota</taxon>
        <taxon>Metazoa</taxon>
        <taxon>Chordata</taxon>
        <taxon>Craniata</taxon>
        <taxon>Vertebrata</taxon>
        <taxon>Euteleostomi</taxon>
        <taxon>Mammalia</taxon>
        <taxon>Eutheria</taxon>
        <taxon>Euarchontoglires</taxon>
        <taxon>Glires</taxon>
        <taxon>Rodentia</taxon>
        <taxon>Myomorpha</taxon>
        <taxon>Muroidea</taxon>
        <taxon>Muridae</taxon>
        <taxon>Murinae</taxon>
        <taxon>Mus</taxon>
        <taxon>Mus</taxon>
    </lineage>
</organism>
<sequence>MSQMGLHPRRGLTGHWLQRFQPCLPLHTVQWRRLLLLAFLLSLAWPASPLPREEEIVFPEKLNGSSILPGSGVPARLLYRLPAFGEMLLLELEQDPGVQVEGLTVQYLGQAPEMLGGAEPGTYLTGTINGDPESVASLHWDGGALLGVLQYRGAELHLQPLEGGALNSAGGPGAHILRRKSPASSQGPMCTVKAPSGSPSPISRRTKRFASLSRFVETLVVADDKMAAFHGTGLKRYLLTVMAAAAKAFKHPSIRNPVNLVVTRLVILGSGQEGPQVGPSAAQTLRSFCTWQRGLNTPNDSDPDHFDTAILFTRQDLCGVSTCDTLGMADVGTVCDPARSCAIVEDDGLQSAFTAAHELGHVFNMLHDNSKPCTNLNGQGGSSRHVMAPVMAHVDPEEPWSPCSARFITDFLDNGYGHCLLDKPEAPLHLPATFPGKDYDADRQCQLTFGPDSSHCPQLPPPCAALWCSGHLNGHAMCQTKHSPWADGTPCGSSQACMGGRCLHVDQLKDFNVPQAGGWGPWGPWGDCSRTCGGGVQFSSRDCTRPVPRNGGKYCEGRRTRFRSCNTENCPHGSALTFREEQCAAYNHRTDLFKSFPGPMDWVPRYTGVAPRDQCKLTCQARALGYYYVLEPRVADGTPCSPDTSSVCVQGRCIHAGCDRIIGSKKKFDKCMVCGGDGSRCSKQSGSFKKFRYGYSDVVTIPAGATHILVRQQGGSGLKSIYLALKLSDGSYALNGEYTLMPSPTDVVLPGAVSLRYSGATAASETLSGHGPLAQPLTLQVLVAGNPQNARLRYSFFVPRPVPSTPRPPPQDWLQRRAEILKILRKRPWAGRK</sequence>
<dbReference type="EC" id="3.4.24.82"/>
<dbReference type="EMBL" id="AK083534">
    <property type="protein sequence ID" value="BAC38944.1"/>
    <property type="status" value="ALT_INIT"/>
    <property type="molecule type" value="mRNA"/>
</dbReference>
<dbReference type="EMBL" id="BC027773">
    <property type="protein sequence ID" value="AAH27773.1"/>
    <property type="molecule type" value="mRNA"/>
</dbReference>
<dbReference type="CCDS" id="CCDS15485.2"/>
<dbReference type="RefSeq" id="NP_766433.2">
    <property type="nucleotide sequence ID" value="NM_172845.3"/>
</dbReference>
<dbReference type="SMR" id="Q8BNJ2"/>
<dbReference type="FunCoup" id="Q8BNJ2">
    <property type="interactions" value="52"/>
</dbReference>
<dbReference type="STRING" id="10090.ENSMUSP00000151387"/>
<dbReference type="MEROPS" id="M12.221"/>
<dbReference type="GlyCosmos" id="Q8BNJ2">
    <property type="glycosylation" value="2 sites, No reported glycans"/>
</dbReference>
<dbReference type="GlyGen" id="Q8BNJ2">
    <property type="glycosylation" value="2 sites, 2 N-linked glycans (2 sites)"/>
</dbReference>
<dbReference type="PhosphoSitePlus" id="Q8BNJ2"/>
<dbReference type="PaxDb" id="10090-ENSMUSP00000006570"/>
<dbReference type="ProteomicsDB" id="277228"/>
<dbReference type="Antibodypedia" id="20503">
    <property type="antibodies" value="569 antibodies from 36 providers"/>
</dbReference>
<dbReference type="DNASU" id="240913"/>
<dbReference type="Ensembl" id="ENSMUST00000111315.9">
    <property type="protein sequence ID" value="ENSMUSP00000106947.4"/>
    <property type="gene ID" value="ENSMUSG00000006403.14"/>
</dbReference>
<dbReference type="GeneID" id="240913"/>
<dbReference type="KEGG" id="mmu:240913"/>
<dbReference type="AGR" id="MGI:1339949"/>
<dbReference type="CTD" id="9507"/>
<dbReference type="MGI" id="MGI:1339949">
    <property type="gene designation" value="Adamts4"/>
</dbReference>
<dbReference type="VEuPathDB" id="HostDB:ENSMUSG00000006403"/>
<dbReference type="eggNOG" id="KOG3538">
    <property type="taxonomic scope" value="Eukaryota"/>
</dbReference>
<dbReference type="GeneTree" id="ENSGT00940000160966"/>
<dbReference type="InParanoid" id="Q8BNJ2"/>
<dbReference type="OMA" id="HDDDKHC"/>
<dbReference type="OrthoDB" id="12257at9989"/>
<dbReference type="BRENDA" id="3.4.24.82">
    <property type="organism ID" value="3474"/>
</dbReference>
<dbReference type="Reactome" id="R-MMU-1474228">
    <property type="pathway name" value="Degradation of the extracellular matrix"/>
</dbReference>
<dbReference type="Reactome" id="R-MMU-5173214">
    <property type="pathway name" value="O-glycosylation of TSR domain-containing proteins"/>
</dbReference>
<dbReference type="BioGRID-ORCS" id="240913">
    <property type="hits" value="1 hit in 78 CRISPR screens"/>
</dbReference>
<dbReference type="ChiTaRS" id="Adamts4">
    <property type="organism name" value="mouse"/>
</dbReference>
<dbReference type="PRO" id="PR:Q8BNJ2"/>
<dbReference type="Proteomes" id="UP000000589">
    <property type="component" value="Chromosome 1"/>
</dbReference>
<dbReference type="RNAct" id="Q8BNJ2">
    <property type="molecule type" value="protein"/>
</dbReference>
<dbReference type="Bgee" id="ENSMUSG00000006403">
    <property type="expression patterns" value="Expressed in lumbar subsegment of spinal cord and 174 other cell types or tissues"/>
</dbReference>
<dbReference type="ExpressionAtlas" id="Q8BNJ2">
    <property type="expression patterns" value="baseline and differential"/>
</dbReference>
<dbReference type="GO" id="GO:0062023">
    <property type="term" value="C:collagen-containing extracellular matrix"/>
    <property type="evidence" value="ECO:0007005"/>
    <property type="project" value="UniProtKB"/>
</dbReference>
<dbReference type="GO" id="GO:0005615">
    <property type="term" value="C:extracellular space"/>
    <property type="evidence" value="ECO:0007669"/>
    <property type="project" value="Ensembl"/>
</dbReference>
<dbReference type="GO" id="GO:0016607">
    <property type="term" value="C:nuclear speck"/>
    <property type="evidence" value="ECO:0007669"/>
    <property type="project" value="Ensembl"/>
</dbReference>
<dbReference type="GO" id="GO:0004222">
    <property type="term" value="F:metalloendopeptidase activity"/>
    <property type="evidence" value="ECO:0000314"/>
    <property type="project" value="MGI"/>
</dbReference>
<dbReference type="GO" id="GO:0008237">
    <property type="term" value="F:metallopeptidase activity"/>
    <property type="evidence" value="ECO:0000314"/>
    <property type="project" value="MGI"/>
</dbReference>
<dbReference type="GO" id="GO:0002020">
    <property type="term" value="F:protease binding"/>
    <property type="evidence" value="ECO:0007669"/>
    <property type="project" value="Ensembl"/>
</dbReference>
<dbReference type="GO" id="GO:0008270">
    <property type="term" value="F:zinc ion binding"/>
    <property type="evidence" value="ECO:0007669"/>
    <property type="project" value="Ensembl"/>
</dbReference>
<dbReference type="GO" id="GO:0042742">
    <property type="term" value="P:defense response to bacterium"/>
    <property type="evidence" value="ECO:0000316"/>
    <property type="project" value="MGI"/>
</dbReference>
<dbReference type="GO" id="GO:0030198">
    <property type="term" value="P:extracellular matrix organization"/>
    <property type="evidence" value="ECO:0007669"/>
    <property type="project" value="InterPro"/>
</dbReference>
<dbReference type="GO" id="GO:0030167">
    <property type="term" value="P:proteoglycan catabolic process"/>
    <property type="evidence" value="ECO:0007669"/>
    <property type="project" value="Ensembl"/>
</dbReference>
<dbReference type="GO" id="GO:0006508">
    <property type="term" value="P:proteolysis"/>
    <property type="evidence" value="ECO:0000314"/>
    <property type="project" value="MGI"/>
</dbReference>
<dbReference type="CDD" id="cd04273">
    <property type="entry name" value="ZnMc_ADAMTS_like"/>
    <property type="match status" value="1"/>
</dbReference>
<dbReference type="FunFam" id="2.20.100.10:FF:000006">
    <property type="entry name" value="A disintegrin and metalloproteinase with thrombospondin motifs 1"/>
    <property type="match status" value="1"/>
</dbReference>
<dbReference type="FunFam" id="2.60.120.830:FF:000001">
    <property type="entry name" value="A disintegrin and metalloproteinase with thrombospondin motifs 1"/>
    <property type="match status" value="1"/>
</dbReference>
<dbReference type="FunFam" id="3.40.1620.60:FF:000003">
    <property type="entry name" value="A disintegrin and metalloproteinase with thrombospondin motifs 1"/>
    <property type="match status" value="1"/>
</dbReference>
<dbReference type="FunFam" id="3.40.390.10:FF:000001">
    <property type="entry name" value="A disintegrin and metalloproteinase with thrombospondin motifs 1"/>
    <property type="match status" value="1"/>
</dbReference>
<dbReference type="Gene3D" id="2.60.120.830">
    <property type="match status" value="1"/>
</dbReference>
<dbReference type="Gene3D" id="3.40.1620.60">
    <property type="match status" value="1"/>
</dbReference>
<dbReference type="Gene3D" id="3.40.390.10">
    <property type="entry name" value="Collagenase (Catalytic Domain)"/>
    <property type="match status" value="1"/>
</dbReference>
<dbReference type="Gene3D" id="2.20.100.10">
    <property type="entry name" value="Thrombospondin type-1 (TSP1) repeat"/>
    <property type="match status" value="1"/>
</dbReference>
<dbReference type="InterPro" id="IPR006586">
    <property type="entry name" value="ADAM_Cys-rich"/>
</dbReference>
<dbReference type="InterPro" id="IPR013273">
    <property type="entry name" value="ADAMTS/ADAMTS-like"/>
</dbReference>
<dbReference type="InterPro" id="IPR050439">
    <property type="entry name" value="ADAMTS_ADAMTS-like"/>
</dbReference>
<dbReference type="InterPro" id="IPR041645">
    <property type="entry name" value="ADAMTS_CR_2"/>
</dbReference>
<dbReference type="InterPro" id="IPR045371">
    <property type="entry name" value="ADAMTS_CR_3"/>
</dbReference>
<dbReference type="InterPro" id="IPR010294">
    <property type="entry name" value="ADAMTS_spacer1"/>
</dbReference>
<dbReference type="InterPro" id="IPR024079">
    <property type="entry name" value="MetalloPept_cat_dom_sf"/>
</dbReference>
<dbReference type="InterPro" id="IPR001590">
    <property type="entry name" value="Peptidase_M12B"/>
</dbReference>
<dbReference type="InterPro" id="IPR000884">
    <property type="entry name" value="TSP1_rpt"/>
</dbReference>
<dbReference type="InterPro" id="IPR036383">
    <property type="entry name" value="TSP1_rpt_sf"/>
</dbReference>
<dbReference type="PANTHER" id="PTHR13723:SF38">
    <property type="entry name" value="A DISINTEGRIN AND METALLOPROTEINASE WITH THROMBOSPONDIN MOTIFS 4"/>
    <property type="match status" value="1"/>
</dbReference>
<dbReference type="PANTHER" id="PTHR13723">
    <property type="entry name" value="ADAMTS A DISINTEGRIN AND METALLOPROTEASE WITH THROMBOSPONDIN MOTIFS PROTEASE"/>
    <property type="match status" value="1"/>
</dbReference>
<dbReference type="Pfam" id="PF17771">
    <property type="entry name" value="ADAMTS_CR_2"/>
    <property type="match status" value="1"/>
</dbReference>
<dbReference type="Pfam" id="PF19236">
    <property type="entry name" value="ADAMTS_CR_3"/>
    <property type="match status" value="1"/>
</dbReference>
<dbReference type="Pfam" id="PF05986">
    <property type="entry name" value="ADAMTS_spacer1"/>
    <property type="match status" value="1"/>
</dbReference>
<dbReference type="Pfam" id="PF01421">
    <property type="entry name" value="Reprolysin"/>
    <property type="match status" value="1"/>
</dbReference>
<dbReference type="Pfam" id="PF00090">
    <property type="entry name" value="TSP_1"/>
    <property type="match status" value="1"/>
</dbReference>
<dbReference type="PRINTS" id="PR01857">
    <property type="entry name" value="ADAMTSFAMILY"/>
</dbReference>
<dbReference type="SMART" id="SM00608">
    <property type="entry name" value="ACR"/>
    <property type="match status" value="1"/>
</dbReference>
<dbReference type="SMART" id="SM00209">
    <property type="entry name" value="TSP1"/>
    <property type="match status" value="1"/>
</dbReference>
<dbReference type="SUPFAM" id="SSF55486">
    <property type="entry name" value="Metalloproteases ('zincins'), catalytic domain"/>
    <property type="match status" value="1"/>
</dbReference>
<dbReference type="SUPFAM" id="SSF82895">
    <property type="entry name" value="TSP-1 type 1 repeat"/>
    <property type="match status" value="1"/>
</dbReference>
<dbReference type="PROSITE" id="PS50215">
    <property type="entry name" value="ADAM_MEPRO"/>
    <property type="match status" value="1"/>
</dbReference>
<dbReference type="PROSITE" id="PS50092">
    <property type="entry name" value="TSP1"/>
    <property type="match status" value="1"/>
</dbReference>
<dbReference type="PROSITE" id="PS00142">
    <property type="entry name" value="ZINC_PROTEASE"/>
    <property type="match status" value="1"/>
</dbReference>